<accession>Q18CJ0</accession>
<organism>
    <name type="scientific">Clostridioides difficile (strain 630)</name>
    <name type="common">Peptoclostridium difficile</name>
    <dbReference type="NCBI Taxonomy" id="272563"/>
    <lineage>
        <taxon>Bacteria</taxon>
        <taxon>Bacillati</taxon>
        <taxon>Bacillota</taxon>
        <taxon>Clostridia</taxon>
        <taxon>Peptostreptococcales</taxon>
        <taxon>Peptostreptococcaceae</taxon>
        <taxon>Clostridioides</taxon>
    </lineage>
</organism>
<protein>
    <recommendedName>
        <fullName evidence="1">Energy-coupling factor transporter ATP-binding protein EcfA1</fullName>
        <shortName evidence="1">ECF transporter A component EcfA1</shortName>
        <ecNumber evidence="1">7.-.-.-</ecNumber>
    </recommendedName>
</protein>
<proteinExistence type="inferred from homology"/>
<comment type="function">
    <text evidence="1">ATP-binding (A) component of a common energy-coupling factor (ECF) ABC-transporter complex. Unlike classic ABC transporters this ECF transporter provides the energy necessary to transport a number of different substrates.</text>
</comment>
<comment type="subunit">
    <text evidence="1">Forms a stable energy-coupling factor (ECF) transporter complex composed of 2 membrane-embedded substrate-binding proteins (S component), 2 ATP-binding proteins (A component) and 2 transmembrane proteins (T component).</text>
</comment>
<comment type="subcellular location">
    <subcellularLocation>
        <location evidence="1">Cell membrane</location>
        <topology evidence="1">Peripheral membrane protein</topology>
    </subcellularLocation>
</comment>
<comment type="similarity">
    <text evidence="1">Belongs to the ABC transporter superfamily. Energy-coupling factor EcfA family.</text>
</comment>
<keyword id="KW-0067">ATP-binding</keyword>
<keyword id="KW-1003">Cell membrane</keyword>
<keyword id="KW-0472">Membrane</keyword>
<keyword id="KW-0547">Nucleotide-binding</keyword>
<keyword id="KW-1185">Reference proteome</keyword>
<keyword id="KW-1278">Translocase</keyword>
<keyword id="KW-0813">Transport</keyword>
<sequence>MDNIVKVNNISFEYITDEAKLKAIDNLSLDVKKGEFVAIIGHNGSGKSTLSKNLNAILMPTEGNILIDDMDTKEEERLWDIRQTAGMVFQNPDNQIVATIVEEDVAFGPENLGIEPKEIRRIVEESLKSVGMYDLRDRQPHLLSGGQKQRVAIAGIIAMRPKCIIFDEATAMLDPSGRKEVMKTIKRLNKEENITVIHITHFMEEAVEADRVVVMEKGKKILEGTPREVFSKIKMLKEIGLDVPCMTELSSLLIEEGINISSDILTVDEMVMELCQL</sequence>
<gene>
    <name evidence="1" type="primary">ecfA1</name>
    <name type="synonym">cbiO1</name>
    <name type="ordered locus">CD630_01000</name>
</gene>
<dbReference type="EC" id="7.-.-.-" evidence="1"/>
<dbReference type="EMBL" id="AM180355">
    <property type="protein sequence ID" value="CAJ66919.1"/>
    <property type="molecule type" value="Genomic_DNA"/>
</dbReference>
<dbReference type="RefSeq" id="WP_003435660.1">
    <property type="nucleotide sequence ID" value="NZ_JAUPES010000043.1"/>
</dbReference>
<dbReference type="RefSeq" id="YP_001086568.1">
    <property type="nucleotide sequence ID" value="NC_009089.1"/>
</dbReference>
<dbReference type="SMR" id="Q18CJ0"/>
<dbReference type="STRING" id="272563.CD630_01000"/>
<dbReference type="EnsemblBacteria" id="CAJ66919">
    <property type="protein sequence ID" value="CAJ66919"/>
    <property type="gene ID" value="CD630_01000"/>
</dbReference>
<dbReference type="KEGG" id="cdf:CD630_01000"/>
<dbReference type="KEGG" id="pdc:CDIF630_00170"/>
<dbReference type="PATRIC" id="fig|272563.120.peg.110"/>
<dbReference type="eggNOG" id="COG1122">
    <property type="taxonomic scope" value="Bacteria"/>
</dbReference>
<dbReference type="OrthoDB" id="9784332at2"/>
<dbReference type="PhylomeDB" id="Q18CJ0"/>
<dbReference type="BioCyc" id="MetaCyc:G12WB-158-MONOMER"/>
<dbReference type="BioCyc" id="PDIF272563:G12WB-158-MONOMER"/>
<dbReference type="Proteomes" id="UP000001978">
    <property type="component" value="Chromosome"/>
</dbReference>
<dbReference type="GO" id="GO:0043190">
    <property type="term" value="C:ATP-binding cassette (ABC) transporter complex"/>
    <property type="evidence" value="ECO:0007669"/>
    <property type="project" value="TreeGrafter"/>
</dbReference>
<dbReference type="GO" id="GO:0005524">
    <property type="term" value="F:ATP binding"/>
    <property type="evidence" value="ECO:0007669"/>
    <property type="project" value="UniProtKB-KW"/>
</dbReference>
<dbReference type="GO" id="GO:0016887">
    <property type="term" value="F:ATP hydrolysis activity"/>
    <property type="evidence" value="ECO:0007669"/>
    <property type="project" value="InterPro"/>
</dbReference>
<dbReference type="GO" id="GO:0042626">
    <property type="term" value="F:ATPase-coupled transmembrane transporter activity"/>
    <property type="evidence" value="ECO:0007669"/>
    <property type="project" value="TreeGrafter"/>
</dbReference>
<dbReference type="CDD" id="cd03225">
    <property type="entry name" value="ABC_cobalt_CbiO_domain1"/>
    <property type="match status" value="1"/>
</dbReference>
<dbReference type="FunFam" id="3.40.50.300:FF:000224">
    <property type="entry name" value="Energy-coupling factor transporter ATP-binding protein EcfA"/>
    <property type="match status" value="1"/>
</dbReference>
<dbReference type="Gene3D" id="3.40.50.300">
    <property type="entry name" value="P-loop containing nucleotide triphosphate hydrolases"/>
    <property type="match status" value="1"/>
</dbReference>
<dbReference type="InterPro" id="IPR003593">
    <property type="entry name" value="AAA+_ATPase"/>
</dbReference>
<dbReference type="InterPro" id="IPR003439">
    <property type="entry name" value="ABC_transporter-like_ATP-bd"/>
</dbReference>
<dbReference type="InterPro" id="IPR017871">
    <property type="entry name" value="ABC_transporter-like_CS"/>
</dbReference>
<dbReference type="InterPro" id="IPR015856">
    <property type="entry name" value="ABC_transpr_CbiO/EcfA_su"/>
</dbReference>
<dbReference type="InterPro" id="IPR050095">
    <property type="entry name" value="ECF_ABC_transporter_ATP-bd"/>
</dbReference>
<dbReference type="InterPro" id="IPR030947">
    <property type="entry name" value="EcfA_1"/>
</dbReference>
<dbReference type="InterPro" id="IPR027417">
    <property type="entry name" value="P-loop_NTPase"/>
</dbReference>
<dbReference type="NCBIfam" id="TIGR04520">
    <property type="entry name" value="ECF_ATPase_1"/>
    <property type="match status" value="1"/>
</dbReference>
<dbReference type="NCBIfam" id="NF010167">
    <property type="entry name" value="PRK13648.1"/>
    <property type="match status" value="1"/>
</dbReference>
<dbReference type="PANTHER" id="PTHR43553:SF24">
    <property type="entry name" value="ENERGY-COUPLING FACTOR TRANSPORTER ATP-BINDING PROTEIN ECFA1"/>
    <property type="match status" value="1"/>
</dbReference>
<dbReference type="PANTHER" id="PTHR43553">
    <property type="entry name" value="HEAVY METAL TRANSPORTER"/>
    <property type="match status" value="1"/>
</dbReference>
<dbReference type="Pfam" id="PF00005">
    <property type="entry name" value="ABC_tran"/>
    <property type="match status" value="1"/>
</dbReference>
<dbReference type="SMART" id="SM00382">
    <property type="entry name" value="AAA"/>
    <property type="match status" value="1"/>
</dbReference>
<dbReference type="SUPFAM" id="SSF52540">
    <property type="entry name" value="P-loop containing nucleoside triphosphate hydrolases"/>
    <property type="match status" value="1"/>
</dbReference>
<dbReference type="PROSITE" id="PS00211">
    <property type="entry name" value="ABC_TRANSPORTER_1"/>
    <property type="match status" value="1"/>
</dbReference>
<dbReference type="PROSITE" id="PS50893">
    <property type="entry name" value="ABC_TRANSPORTER_2"/>
    <property type="match status" value="1"/>
</dbReference>
<dbReference type="PROSITE" id="PS51246">
    <property type="entry name" value="CBIO"/>
    <property type="match status" value="1"/>
</dbReference>
<feature type="chain" id="PRO_0000287928" description="Energy-coupling factor transporter ATP-binding protein EcfA1">
    <location>
        <begin position="1"/>
        <end position="277"/>
    </location>
</feature>
<feature type="domain" description="ABC transporter" evidence="1">
    <location>
        <begin position="5"/>
        <end position="242"/>
    </location>
</feature>
<feature type="binding site" evidence="1">
    <location>
        <begin position="41"/>
        <end position="48"/>
    </location>
    <ligand>
        <name>ATP</name>
        <dbReference type="ChEBI" id="CHEBI:30616"/>
    </ligand>
</feature>
<name>ECFA1_CLOD6</name>
<evidence type="ECO:0000255" key="1">
    <source>
        <dbReference type="HAMAP-Rule" id="MF_01710"/>
    </source>
</evidence>
<reference key="1">
    <citation type="journal article" date="2006" name="Nat. Genet.">
        <title>The multidrug-resistant human pathogen Clostridium difficile has a highly mobile, mosaic genome.</title>
        <authorList>
            <person name="Sebaihia M."/>
            <person name="Wren B.W."/>
            <person name="Mullany P."/>
            <person name="Fairweather N.F."/>
            <person name="Minton N."/>
            <person name="Stabler R."/>
            <person name="Thomson N.R."/>
            <person name="Roberts A.P."/>
            <person name="Cerdeno-Tarraga A.M."/>
            <person name="Wang H."/>
            <person name="Holden M.T.G."/>
            <person name="Wright A."/>
            <person name="Churcher C."/>
            <person name="Quail M.A."/>
            <person name="Baker S."/>
            <person name="Bason N."/>
            <person name="Brooks K."/>
            <person name="Chillingworth T."/>
            <person name="Cronin A."/>
            <person name="Davis P."/>
            <person name="Dowd L."/>
            <person name="Fraser A."/>
            <person name="Feltwell T."/>
            <person name="Hance Z."/>
            <person name="Holroyd S."/>
            <person name="Jagels K."/>
            <person name="Moule S."/>
            <person name="Mungall K."/>
            <person name="Price C."/>
            <person name="Rabbinowitsch E."/>
            <person name="Sharp S."/>
            <person name="Simmonds M."/>
            <person name="Stevens K."/>
            <person name="Unwin L."/>
            <person name="Whithead S."/>
            <person name="Dupuy B."/>
            <person name="Dougan G."/>
            <person name="Barrell B."/>
            <person name="Parkhill J."/>
        </authorList>
    </citation>
    <scope>NUCLEOTIDE SEQUENCE [LARGE SCALE GENOMIC DNA]</scope>
    <source>
        <strain>630</strain>
    </source>
</reference>